<gene>
    <name evidence="1" type="primary">bchN</name>
    <name type="ordered locus">Rpal_1730</name>
</gene>
<accession>B3Q7C4</accession>
<organism>
    <name type="scientific">Rhodopseudomonas palustris (strain TIE-1)</name>
    <dbReference type="NCBI Taxonomy" id="395960"/>
    <lineage>
        <taxon>Bacteria</taxon>
        <taxon>Pseudomonadati</taxon>
        <taxon>Pseudomonadota</taxon>
        <taxon>Alphaproteobacteria</taxon>
        <taxon>Hyphomicrobiales</taxon>
        <taxon>Nitrobacteraceae</taxon>
        <taxon>Rhodopseudomonas</taxon>
    </lineage>
</organism>
<comment type="function">
    <text evidence="1">Component of the dark-operative protochlorophyllide reductase (DPOR) that uses Mg-ATP and reduced ferredoxin to reduce ring D of protochlorophyllide (Pchlide) to form chlorophyllide a (Chlide). This reaction is light-independent. The NB-protein (BchN-BchB) is the catalytic component of the complex.</text>
</comment>
<comment type="catalytic activity">
    <reaction evidence="1">
        <text>chlorophyllide a + oxidized 2[4Fe-4S]-[ferredoxin] + 2 ADP + 2 phosphate = protochlorophyllide a + reduced 2[4Fe-4S]-[ferredoxin] + 2 ATP + 2 H2O</text>
        <dbReference type="Rhea" id="RHEA:28202"/>
        <dbReference type="Rhea" id="RHEA-COMP:10002"/>
        <dbReference type="Rhea" id="RHEA-COMP:10004"/>
        <dbReference type="ChEBI" id="CHEBI:15377"/>
        <dbReference type="ChEBI" id="CHEBI:30616"/>
        <dbReference type="ChEBI" id="CHEBI:33722"/>
        <dbReference type="ChEBI" id="CHEBI:33723"/>
        <dbReference type="ChEBI" id="CHEBI:43474"/>
        <dbReference type="ChEBI" id="CHEBI:83348"/>
        <dbReference type="ChEBI" id="CHEBI:83350"/>
        <dbReference type="ChEBI" id="CHEBI:456216"/>
        <dbReference type="EC" id="1.3.7.7"/>
    </reaction>
</comment>
<comment type="cofactor">
    <cofactor evidence="1">
        <name>[4Fe-4S] cluster</name>
        <dbReference type="ChEBI" id="CHEBI:49883"/>
    </cofactor>
    <text evidence="1">Binds 1 [4Fe-4S] cluster per heterodimer. The cluster is bound at the heterodimer interface by residues from both subunits.</text>
</comment>
<comment type="pathway">
    <text evidence="1">Porphyrin-containing compound metabolism; bacteriochlorophyll biosynthesis (light-independent).</text>
</comment>
<comment type="subunit">
    <text evidence="1">Protochlorophyllide reductase is composed of three subunits; BchL, BchN and BchB. Forms a heterotetramer of two BchB and two BchN subunits.</text>
</comment>
<comment type="similarity">
    <text evidence="1">Belongs to the BchN/ChlN family.</text>
</comment>
<reference key="1">
    <citation type="submission" date="2008-05" db="EMBL/GenBank/DDBJ databases">
        <title>Complete sequence of Rhodopseudomonas palustris TIE-1.</title>
        <authorList>
            <consortium name="US DOE Joint Genome Institute"/>
            <person name="Lucas S."/>
            <person name="Copeland A."/>
            <person name="Lapidus A."/>
            <person name="Glavina del Rio T."/>
            <person name="Dalin E."/>
            <person name="Tice H."/>
            <person name="Pitluck S."/>
            <person name="Chain P."/>
            <person name="Malfatti S."/>
            <person name="Shin M."/>
            <person name="Vergez L."/>
            <person name="Lang D."/>
            <person name="Schmutz J."/>
            <person name="Larimer F."/>
            <person name="Land M."/>
            <person name="Hauser L."/>
            <person name="Kyrpides N."/>
            <person name="Mikhailova N."/>
            <person name="Emerson D."/>
            <person name="Newman D.K."/>
            <person name="Roden E."/>
            <person name="Richardson P."/>
        </authorList>
    </citation>
    <scope>NUCLEOTIDE SEQUENCE [LARGE SCALE GENOMIC DNA]</scope>
    <source>
        <strain>TIE-1</strain>
    </source>
</reference>
<proteinExistence type="inferred from homology"/>
<protein>
    <recommendedName>
        <fullName evidence="1">Light-independent protochlorophyllide reductase subunit N</fullName>
        <shortName evidence="1">DPOR subunit N</shortName>
        <shortName evidence="1">LI-POR subunit N</shortName>
        <ecNumber evidence="1">1.3.7.7</ecNumber>
    </recommendedName>
</protein>
<sequence length="429" mass="46869">MTVHVTGCSTATADQLVSREIRTESGQREVFCGLTGIVWLHRKIQDAFFLVVGSRTCAHLVQSAAGVMIFAEPRFGTAIMEEKDLAGLTDANDELDRVVTQLLARRPDIKLLFLVGSCPSEVIKLDLSRAAFRLSQRFSPGVRILNYSGSGIETTFTQGEDACLASLVPELPAQTDTKPSLLVVGSLADVVEDQFARMFEALGVGNVAFFPPRKSTALPSVGPNTKILMAQPFLPDTVRALEERGAKRLAAPFPLGVEGTTGWLRAAADAFGVDPAKFEQVTAPNRARAERALSAFKSELGGRRIFFFPDSQLEIPLARFLSRELDMQLVEVATPYLHREHLAEELKLLPIEVALTEGQDVDDQLDRCRIARPDIVVCGLGLANPLEAEGITTKWSIELVFTPIQGYEQAADLAELFARPLVRRAKLVA</sequence>
<evidence type="ECO:0000255" key="1">
    <source>
        <dbReference type="HAMAP-Rule" id="MF_00352"/>
    </source>
</evidence>
<name>BCHN_RHOPT</name>
<feature type="chain" id="PRO_1000120522" description="Light-independent protochlorophyllide reductase subunit N">
    <location>
        <begin position="1"/>
        <end position="429"/>
    </location>
</feature>
<feature type="binding site" evidence="1">
    <location>
        <position position="32"/>
    </location>
    <ligand>
        <name>[4Fe-4S] cluster</name>
        <dbReference type="ChEBI" id="CHEBI:49883"/>
        <note>ligand shared with heterodimeric partner</note>
    </ligand>
</feature>
<feature type="binding site" evidence="1">
    <location>
        <position position="57"/>
    </location>
    <ligand>
        <name>[4Fe-4S] cluster</name>
        <dbReference type="ChEBI" id="CHEBI:49883"/>
        <note>ligand shared with heterodimeric partner</note>
    </ligand>
</feature>
<feature type="binding site" evidence="1">
    <location>
        <position position="118"/>
    </location>
    <ligand>
        <name>[4Fe-4S] cluster</name>
        <dbReference type="ChEBI" id="CHEBI:49883"/>
        <note>ligand shared with heterodimeric partner</note>
    </ligand>
</feature>
<dbReference type="EC" id="1.3.7.7" evidence="1"/>
<dbReference type="EMBL" id="CP001096">
    <property type="protein sequence ID" value="ACF00258.1"/>
    <property type="molecule type" value="Genomic_DNA"/>
</dbReference>
<dbReference type="RefSeq" id="WP_012495157.1">
    <property type="nucleotide sequence ID" value="NC_011004.1"/>
</dbReference>
<dbReference type="SMR" id="B3Q7C4"/>
<dbReference type="KEGG" id="rpt:Rpal_1730"/>
<dbReference type="HOGENOM" id="CLU_037170_0_0_5"/>
<dbReference type="OrthoDB" id="5714774at2"/>
<dbReference type="UniPathway" id="UPA00671"/>
<dbReference type="Proteomes" id="UP000001725">
    <property type="component" value="Chromosome"/>
</dbReference>
<dbReference type="GO" id="GO:0051539">
    <property type="term" value="F:4 iron, 4 sulfur cluster binding"/>
    <property type="evidence" value="ECO:0007669"/>
    <property type="project" value="UniProtKB-UniRule"/>
</dbReference>
<dbReference type="GO" id="GO:0005524">
    <property type="term" value="F:ATP binding"/>
    <property type="evidence" value="ECO:0007669"/>
    <property type="project" value="UniProtKB-UniRule"/>
</dbReference>
<dbReference type="GO" id="GO:0046872">
    <property type="term" value="F:metal ion binding"/>
    <property type="evidence" value="ECO:0007669"/>
    <property type="project" value="UniProtKB-KW"/>
</dbReference>
<dbReference type="GO" id="GO:0016730">
    <property type="term" value="F:oxidoreductase activity, acting on iron-sulfur proteins as donors"/>
    <property type="evidence" value="ECO:0007669"/>
    <property type="project" value="InterPro"/>
</dbReference>
<dbReference type="GO" id="GO:0016636">
    <property type="term" value="F:oxidoreductase activity, acting on the CH-CH group of donors, iron-sulfur protein as acceptor"/>
    <property type="evidence" value="ECO:0007669"/>
    <property type="project" value="UniProtKB-UniRule"/>
</dbReference>
<dbReference type="GO" id="GO:0036070">
    <property type="term" value="P:light-independent bacteriochlorophyll biosynthetic process"/>
    <property type="evidence" value="ECO:0007669"/>
    <property type="project" value="UniProtKB-UniRule"/>
</dbReference>
<dbReference type="GO" id="GO:0019685">
    <property type="term" value="P:photosynthesis, dark reaction"/>
    <property type="evidence" value="ECO:0007669"/>
    <property type="project" value="InterPro"/>
</dbReference>
<dbReference type="CDD" id="cd01979">
    <property type="entry name" value="Pchlide_reductase_N"/>
    <property type="match status" value="1"/>
</dbReference>
<dbReference type="Gene3D" id="3.40.50.1980">
    <property type="entry name" value="Nitrogenase molybdenum iron protein domain"/>
    <property type="match status" value="3"/>
</dbReference>
<dbReference type="HAMAP" id="MF_00352">
    <property type="entry name" value="ChlN_BchN"/>
    <property type="match status" value="1"/>
</dbReference>
<dbReference type="InterPro" id="IPR050293">
    <property type="entry name" value="LIPOR_BchN/ChlN"/>
</dbReference>
<dbReference type="InterPro" id="IPR000510">
    <property type="entry name" value="Nase/OxRdtase_comp1"/>
</dbReference>
<dbReference type="InterPro" id="IPR005970">
    <property type="entry name" value="Protochl_reductN"/>
</dbReference>
<dbReference type="NCBIfam" id="TIGR01279">
    <property type="entry name" value="DPOR_bchN"/>
    <property type="match status" value="1"/>
</dbReference>
<dbReference type="NCBIfam" id="NF002768">
    <property type="entry name" value="PRK02842.1"/>
    <property type="match status" value="1"/>
</dbReference>
<dbReference type="PANTHER" id="PTHR39429">
    <property type="entry name" value="LIGHT-INDEPENDENT PROTOCHLOROPHYLLIDE REDUCTASE SUBUNIT N"/>
    <property type="match status" value="1"/>
</dbReference>
<dbReference type="PANTHER" id="PTHR39429:SF3">
    <property type="entry name" value="LIGHT-INDEPENDENT PROTOCHLOROPHYLLIDE REDUCTASE SUBUNIT N"/>
    <property type="match status" value="1"/>
</dbReference>
<dbReference type="Pfam" id="PF00148">
    <property type="entry name" value="Oxidored_nitro"/>
    <property type="match status" value="1"/>
</dbReference>
<dbReference type="PIRSF" id="PIRSF000162">
    <property type="entry name" value="P_chlorophyll_rd"/>
    <property type="match status" value="1"/>
</dbReference>
<dbReference type="SUPFAM" id="SSF53807">
    <property type="entry name" value="Helical backbone' metal receptor"/>
    <property type="match status" value="1"/>
</dbReference>
<keyword id="KW-0004">4Fe-4S</keyword>
<keyword id="KW-0067">ATP-binding</keyword>
<keyword id="KW-0077">Bacteriochlorophyll biosynthesis</keyword>
<keyword id="KW-0149">Chlorophyll biosynthesis</keyword>
<keyword id="KW-0408">Iron</keyword>
<keyword id="KW-0411">Iron-sulfur</keyword>
<keyword id="KW-0479">Metal-binding</keyword>
<keyword id="KW-0547">Nucleotide-binding</keyword>
<keyword id="KW-0560">Oxidoreductase</keyword>
<keyword id="KW-0602">Photosynthesis</keyword>